<protein>
    <recommendedName>
        <fullName>Histone H1.1</fullName>
    </recommendedName>
    <alternativeName>
        <fullName>Histone H1a</fullName>
    </alternativeName>
</protein>
<evidence type="ECO:0000250" key="1"/>
<evidence type="ECO:0000250" key="2">
    <source>
        <dbReference type="UniProtKB" id="G3N131"/>
    </source>
</evidence>
<evidence type="ECO:0000250" key="3">
    <source>
        <dbReference type="UniProtKB" id="P43275"/>
    </source>
</evidence>
<evidence type="ECO:0000250" key="4">
    <source>
        <dbReference type="UniProtKB" id="P43277"/>
    </source>
</evidence>
<evidence type="ECO:0000250" key="5">
    <source>
        <dbReference type="UniProtKB" id="Q02539"/>
    </source>
</evidence>
<evidence type="ECO:0000255" key="6">
    <source>
        <dbReference type="PROSITE-ProRule" id="PRU00837"/>
    </source>
</evidence>
<evidence type="ECO:0000256" key="7">
    <source>
        <dbReference type="SAM" id="MobiDB-lite"/>
    </source>
</evidence>
<evidence type="ECO:0000312" key="8">
    <source>
        <dbReference type="RGD" id="1305706"/>
    </source>
</evidence>
<evidence type="ECO:0007744" key="9">
    <source>
    </source>
</evidence>
<gene>
    <name evidence="5" type="primary">H1-1</name>
    <name evidence="8" type="synonym">Hist1h1a</name>
</gene>
<accession>D4A3K5</accession>
<sequence length="214" mass="22004">MSETAPVPQPASVAPEKPAATKKTRKPAKAAVPRKKPAGPSVSELIVQAVSSSKERSGVSLAALKKSLAAAGYDVEKNNSRIKLGLKSLVNKGTLVQTKGTGAAGSFKLNKKAESKASTTKVTVKAKASGAAKKPKKTAGAAAKKTVKTPKKPKKPAVSKKTSSKSPKKPKVVKAKKVAKSPAKAKAVKPKAAKVKVTKPKTPAKPKKAAPKKK</sequence>
<feature type="initiator methionine" description="Removed" evidence="3">
    <location>
        <position position="1"/>
    </location>
</feature>
<feature type="chain" id="PRO_0000419132" description="Histone H1.1">
    <location>
        <begin position="2"/>
        <end position="214"/>
    </location>
</feature>
<feature type="domain" description="H15" evidence="6">
    <location>
        <begin position="38"/>
        <end position="111"/>
    </location>
</feature>
<feature type="region of interest" description="Disordered" evidence="7">
    <location>
        <begin position="1"/>
        <end position="43"/>
    </location>
</feature>
<feature type="region of interest" description="Disordered" evidence="7">
    <location>
        <begin position="93"/>
        <end position="214"/>
    </location>
</feature>
<feature type="compositionally biased region" description="Basic residues" evidence="7">
    <location>
        <begin position="20"/>
        <end position="37"/>
    </location>
</feature>
<feature type="compositionally biased region" description="Low complexity" evidence="7">
    <location>
        <begin position="116"/>
        <end position="144"/>
    </location>
</feature>
<feature type="compositionally biased region" description="Basic residues" evidence="7">
    <location>
        <begin position="145"/>
        <end position="179"/>
    </location>
</feature>
<feature type="compositionally biased region" description="Basic residues" evidence="7">
    <location>
        <begin position="186"/>
        <end position="214"/>
    </location>
</feature>
<feature type="modified residue" description="N-acetylserine" evidence="3">
    <location>
        <position position="2"/>
    </location>
</feature>
<feature type="modified residue" description="Phosphoserine" evidence="9">
    <location>
        <position position="2"/>
    </location>
</feature>
<feature type="modified residue" description="Phosphoserine" evidence="9">
    <location>
        <position position="12"/>
    </location>
</feature>
<feature type="modified residue" description="N6-acetyllysine" evidence="3">
    <location>
        <position position="17"/>
    </location>
</feature>
<feature type="modified residue" description="N6-(beta-hydroxybutyryl)lysine" evidence="4">
    <location>
        <position position="36"/>
    </location>
</feature>
<feature type="modified residue" description="Phosphoserine" evidence="9">
    <location>
        <position position="43"/>
    </location>
</feature>
<feature type="modified residue" description="N6-(beta-hydroxybutyryl)lysine" evidence="4">
    <location>
        <position position="54"/>
    </location>
</feature>
<feature type="modified residue" description="Citrulline" evidence="3">
    <location>
        <position position="56"/>
    </location>
</feature>
<feature type="modified residue" description="N6-(beta-hydroxybutyryl)lysine" evidence="4">
    <location>
        <position position="66"/>
    </location>
</feature>
<feature type="modified residue" description="Phosphoserine" evidence="9">
    <location>
        <position position="67"/>
    </location>
</feature>
<feature type="modified residue" description="N6-acetyllysine" evidence="3">
    <location>
        <position position="77"/>
    </location>
</feature>
<feature type="modified residue" description="N6-(beta-hydroxybutyryl)lysine" evidence="4">
    <location>
        <position position="87"/>
    </location>
</feature>
<feature type="modified residue" description="N6-(beta-hydroxybutyryl)lysine; alternate" evidence="4">
    <location>
        <position position="92"/>
    </location>
</feature>
<feature type="modified residue" description="N6-acetyllysine; alternate" evidence="3">
    <location>
        <position position="92"/>
    </location>
</feature>
<feature type="modified residue" description="Phosphoserine" evidence="2">
    <location>
        <position position="106"/>
    </location>
</feature>
<feature type="modified residue" description="N6-(beta-hydroxybutyryl)lysine" evidence="4">
    <location>
        <position position="108"/>
    </location>
</feature>
<feature type="modified residue" description="N6-acetyllysine" evidence="3">
    <location>
        <position position="121"/>
    </location>
</feature>
<feature type="modified residue" description="Phosphothreonine" evidence="3">
    <location>
        <position position="202"/>
    </location>
</feature>
<keyword id="KW-0007">Acetylation</keyword>
<keyword id="KW-0158">Chromosome</keyword>
<keyword id="KW-0164">Citrullination</keyword>
<keyword id="KW-0238">DNA-binding</keyword>
<keyword id="KW-0379">Hydroxylation</keyword>
<keyword id="KW-0539">Nucleus</keyword>
<keyword id="KW-0597">Phosphoprotein</keyword>
<keyword id="KW-1185">Reference proteome</keyword>
<dbReference type="EMBL" id="AABR06091665">
    <property type="status" value="NOT_ANNOTATED_CDS"/>
    <property type="molecule type" value="Genomic_DNA"/>
</dbReference>
<dbReference type="EMBL" id="CH474064">
    <property type="protein sequence ID" value="EDL86563.1"/>
    <property type="molecule type" value="Genomic_DNA"/>
</dbReference>
<dbReference type="RefSeq" id="NP_001099583.1">
    <property type="nucleotide sequence ID" value="NM_001106113.1"/>
</dbReference>
<dbReference type="SMR" id="D4A3K5"/>
<dbReference type="BioGRID" id="253432">
    <property type="interactions" value="9"/>
</dbReference>
<dbReference type="FunCoup" id="D4A3K5">
    <property type="interactions" value="222"/>
</dbReference>
<dbReference type="IntAct" id="D4A3K5">
    <property type="interactions" value="5"/>
</dbReference>
<dbReference type="STRING" id="10116.ENSRNOP00000023054"/>
<dbReference type="iPTMnet" id="D4A3K5"/>
<dbReference type="PhosphoSitePlus" id="D4A3K5"/>
<dbReference type="PaxDb" id="10116-ENSRNOP00000023054"/>
<dbReference type="PeptideAtlas" id="D4A3K5"/>
<dbReference type="Ensembl" id="ENSRNOT00000023054.7">
    <property type="protein sequence ID" value="ENSRNOP00000023054.4"/>
    <property type="gene ID" value="ENSRNOG00000017175.7"/>
</dbReference>
<dbReference type="GeneID" id="291145"/>
<dbReference type="KEGG" id="rno:291145"/>
<dbReference type="UCSC" id="RGD:1305706">
    <property type="organism name" value="rat"/>
</dbReference>
<dbReference type="AGR" id="RGD:1305706"/>
<dbReference type="CTD" id="80838"/>
<dbReference type="RGD" id="1305706">
    <property type="gene designation" value="Hist1h1a"/>
</dbReference>
<dbReference type="eggNOG" id="KOG4012">
    <property type="taxonomic scope" value="Eukaryota"/>
</dbReference>
<dbReference type="GeneTree" id="ENSGT00940000163269"/>
<dbReference type="HOGENOM" id="CLU_052897_7_0_1"/>
<dbReference type="InParanoid" id="D4A3K5"/>
<dbReference type="OMA" id="HKEEART"/>
<dbReference type="OrthoDB" id="92451at9989"/>
<dbReference type="PhylomeDB" id="D4A3K5"/>
<dbReference type="TreeFam" id="TF313664"/>
<dbReference type="Reactome" id="R-RNO-140342">
    <property type="pathway name" value="Apoptosis induced DNA fragmentation"/>
</dbReference>
<dbReference type="PRO" id="PR:D4A3K5"/>
<dbReference type="Proteomes" id="UP000002494">
    <property type="component" value="Chromosome 17"/>
</dbReference>
<dbReference type="Proteomes" id="UP000234681">
    <property type="component" value="Chromosome 17"/>
</dbReference>
<dbReference type="Bgee" id="ENSRNOG00000017175">
    <property type="expression patterns" value="Expressed in duodenum and 9 other cell types or tissues"/>
</dbReference>
<dbReference type="GO" id="GO:0009986">
    <property type="term" value="C:cell surface"/>
    <property type="evidence" value="ECO:0000266"/>
    <property type="project" value="RGD"/>
</dbReference>
<dbReference type="GO" id="GO:0000785">
    <property type="term" value="C:chromatin"/>
    <property type="evidence" value="ECO:0000266"/>
    <property type="project" value="RGD"/>
</dbReference>
<dbReference type="GO" id="GO:0000791">
    <property type="term" value="C:euchromatin"/>
    <property type="evidence" value="ECO:0000266"/>
    <property type="project" value="RGD"/>
</dbReference>
<dbReference type="GO" id="GO:0000786">
    <property type="term" value="C:nucleosome"/>
    <property type="evidence" value="ECO:0007669"/>
    <property type="project" value="InterPro"/>
</dbReference>
<dbReference type="GO" id="GO:0005634">
    <property type="term" value="C:nucleus"/>
    <property type="evidence" value="ECO:0000266"/>
    <property type="project" value="RGD"/>
</dbReference>
<dbReference type="GO" id="GO:0031982">
    <property type="term" value="C:vesicle"/>
    <property type="evidence" value="ECO:0000266"/>
    <property type="project" value="RGD"/>
</dbReference>
<dbReference type="GO" id="GO:0031490">
    <property type="term" value="F:chromatin DNA binding"/>
    <property type="evidence" value="ECO:0000266"/>
    <property type="project" value="RGD"/>
</dbReference>
<dbReference type="GO" id="GO:0003677">
    <property type="term" value="F:DNA binding"/>
    <property type="evidence" value="ECO:0000266"/>
    <property type="project" value="RGD"/>
</dbReference>
<dbReference type="GO" id="GO:0003690">
    <property type="term" value="F:double-stranded DNA binding"/>
    <property type="evidence" value="ECO:0000318"/>
    <property type="project" value="GO_Central"/>
</dbReference>
<dbReference type="GO" id="GO:0008201">
    <property type="term" value="F:heparin binding"/>
    <property type="evidence" value="ECO:0000266"/>
    <property type="project" value="RGD"/>
</dbReference>
<dbReference type="GO" id="GO:0031492">
    <property type="term" value="F:nucleosomal DNA binding"/>
    <property type="evidence" value="ECO:0000318"/>
    <property type="project" value="GO_Central"/>
</dbReference>
<dbReference type="GO" id="GO:0030527">
    <property type="term" value="F:structural constituent of chromatin"/>
    <property type="evidence" value="ECO:0007669"/>
    <property type="project" value="InterPro"/>
</dbReference>
<dbReference type="GO" id="GO:0030261">
    <property type="term" value="P:chromosome condensation"/>
    <property type="evidence" value="ECO:0000318"/>
    <property type="project" value="GO_Central"/>
</dbReference>
<dbReference type="GO" id="GO:0045910">
    <property type="term" value="P:negative regulation of DNA recombination"/>
    <property type="evidence" value="ECO:0000318"/>
    <property type="project" value="GO_Central"/>
</dbReference>
<dbReference type="GO" id="GO:0006334">
    <property type="term" value="P:nucleosome assembly"/>
    <property type="evidence" value="ECO:0007669"/>
    <property type="project" value="InterPro"/>
</dbReference>
<dbReference type="GO" id="GO:0048260">
    <property type="term" value="P:positive regulation of receptor-mediated endocytosis"/>
    <property type="evidence" value="ECO:0000266"/>
    <property type="project" value="RGD"/>
</dbReference>
<dbReference type="GO" id="GO:0007283">
    <property type="term" value="P:spermatogenesis"/>
    <property type="evidence" value="ECO:0000266"/>
    <property type="project" value="RGD"/>
</dbReference>
<dbReference type="CDD" id="cd00073">
    <property type="entry name" value="H15"/>
    <property type="match status" value="1"/>
</dbReference>
<dbReference type="FunFam" id="1.10.10.10:FF:000075">
    <property type="entry name" value="Histone H1 like"/>
    <property type="match status" value="1"/>
</dbReference>
<dbReference type="Gene3D" id="1.10.10.10">
    <property type="entry name" value="Winged helix-like DNA-binding domain superfamily/Winged helix DNA-binding domain"/>
    <property type="match status" value="1"/>
</dbReference>
<dbReference type="InterPro" id="IPR005819">
    <property type="entry name" value="H1/H5"/>
</dbReference>
<dbReference type="InterPro" id="IPR005818">
    <property type="entry name" value="Histone_H1/H5_H15"/>
</dbReference>
<dbReference type="InterPro" id="IPR036388">
    <property type="entry name" value="WH-like_DNA-bd_sf"/>
</dbReference>
<dbReference type="InterPro" id="IPR036390">
    <property type="entry name" value="WH_DNA-bd_sf"/>
</dbReference>
<dbReference type="Pfam" id="PF00538">
    <property type="entry name" value="Linker_histone"/>
    <property type="match status" value="1"/>
</dbReference>
<dbReference type="PRINTS" id="PR00624">
    <property type="entry name" value="HISTONEH5"/>
</dbReference>
<dbReference type="SMART" id="SM00526">
    <property type="entry name" value="H15"/>
    <property type="match status" value="1"/>
</dbReference>
<dbReference type="SUPFAM" id="SSF46785">
    <property type="entry name" value="Winged helix' DNA-binding domain"/>
    <property type="match status" value="1"/>
</dbReference>
<dbReference type="PROSITE" id="PS51504">
    <property type="entry name" value="H15"/>
    <property type="match status" value="1"/>
</dbReference>
<name>H11_RAT</name>
<organism>
    <name type="scientific">Rattus norvegicus</name>
    <name type="common">Rat</name>
    <dbReference type="NCBI Taxonomy" id="10116"/>
    <lineage>
        <taxon>Eukaryota</taxon>
        <taxon>Metazoa</taxon>
        <taxon>Chordata</taxon>
        <taxon>Craniata</taxon>
        <taxon>Vertebrata</taxon>
        <taxon>Euteleostomi</taxon>
        <taxon>Mammalia</taxon>
        <taxon>Eutheria</taxon>
        <taxon>Euarchontoglires</taxon>
        <taxon>Glires</taxon>
        <taxon>Rodentia</taxon>
        <taxon>Myomorpha</taxon>
        <taxon>Muroidea</taxon>
        <taxon>Muridae</taxon>
        <taxon>Murinae</taxon>
        <taxon>Rattus</taxon>
    </lineage>
</organism>
<proteinExistence type="evidence at protein level"/>
<reference key="1">
    <citation type="journal article" date="2004" name="Nature">
        <title>Genome sequence of the Brown Norway rat yields insights into mammalian evolution.</title>
        <authorList>
            <person name="Gibbs R.A."/>
            <person name="Weinstock G.M."/>
            <person name="Metzker M.L."/>
            <person name="Muzny D.M."/>
            <person name="Sodergren E.J."/>
            <person name="Scherer S."/>
            <person name="Scott G."/>
            <person name="Steffen D."/>
            <person name="Worley K.C."/>
            <person name="Burch P.E."/>
            <person name="Okwuonu G."/>
            <person name="Hines S."/>
            <person name="Lewis L."/>
            <person name="Deramo C."/>
            <person name="Delgado O."/>
            <person name="Dugan-Rocha S."/>
            <person name="Miner G."/>
            <person name="Morgan M."/>
            <person name="Hawes A."/>
            <person name="Gill R."/>
            <person name="Holt R.A."/>
            <person name="Adams M.D."/>
            <person name="Amanatides P.G."/>
            <person name="Baden-Tillson H."/>
            <person name="Barnstead M."/>
            <person name="Chin S."/>
            <person name="Evans C.A."/>
            <person name="Ferriera S."/>
            <person name="Fosler C."/>
            <person name="Glodek A."/>
            <person name="Gu Z."/>
            <person name="Jennings D."/>
            <person name="Kraft C.L."/>
            <person name="Nguyen T."/>
            <person name="Pfannkoch C.M."/>
            <person name="Sitter C."/>
            <person name="Sutton G.G."/>
            <person name="Venter J.C."/>
            <person name="Woodage T."/>
            <person name="Smith D."/>
            <person name="Lee H.-M."/>
            <person name="Gustafson E."/>
            <person name="Cahill P."/>
            <person name="Kana A."/>
            <person name="Doucette-Stamm L."/>
            <person name="Weinstock K."/>
            <person name="Fechtel K."/>
            <person name="Weiss R.B."/>
            <person name="Dunn D.M."/>
            <person name="Green E.D."/>
            <person name="Blakesley R.W."/>
            <person name="Bouffard G.G."/>
            <person name="De Jong P.J."/>
            <person name="Osoegawa K."/>
            <person name="Zhu B."/>
            <person name="Marra M."/>
            <person name="Schein J."/>
            <person name="Bosdet I."/>
            <person name="Fjell C."/>
            <person name="Jones S."/>
            <person name="Krzywinski M."/>
            <person name="Mathewson C."/>
            <person name="Siddiqui A."/>
            <person name="Wye N."/>
            <person name="McPherson J."/>
            <person name="Zhao S."/>
            <person name="Fraser C.M."/>
            <person name="Shetty J."/>
            <person name="Shatsman S."/>
            <person name="Geer K."/>
            <person name="Chen Y."/>
            <person name="Abramzon S."/>
            <person name="Nierman W.C."/>
            <person name="Havlak P.H."/>
            <person name="Chen R."/>
            <person name="Durbin K.J."/>
            <person name="Egan A."/>
            <person name="Ren Y."/>
            <person name="Song X.-Z."/>
            <person name="Li B."/>
            <person name="Liu Y."/>
            <person name="Qin X."/>
            <person name="Cawley S."/>
            <person name="Cooney A.J."/>
            <person name="D'Souza L.M."/>
            <person name="Martin K."/>
            <person name="Wu J.Q."/>
            <person name="Gonzalez-Garay M.L."/>
            <person name="Jackson A.R."/>
            <person name="Kalafus K.J."/>
            <person name="McLeod M.P."/>
            <person name="Milosavljevic A."/>
            <person name="Virk D."/>
            <person name="Volkov A."/>
            <person name="Wheeler D.A."/>
            <person name="Zhang Z."/>
            <person name="Bailey J.A."/>
            <person name="Eichler E.E."/>
            <person name="Tuzun E."/>
            <person name="Birney E."/>
            <person name="Mongin E."/>
            <person name="Ureta-Vidal A."/>
            <person name="Woodwark C."/>
            <person name="Zdobnov E."/>
            <person name="Bork P."/>
            <person name="Suyama M."/>
            <person name="Torrents D."/>
            <person name="Alexandersson M."/>
            <person name="Trask B.J."/>
            <person name="Young J.M."/>
            <person name="Huang H."/>
            <person name="Wang H."/>
            <person name="Xing H."/>
            <person name="Daniels S."/>
            <person name="Gietzen D."/>
            <person name="Schmidt J."/>
            <person name="Stevens K."/>
            <person name="Vitt U."/>
            <person name="Wingrove J."/>
            <person name="Camara F."/>
            <person name="Mar Alba M."/>
            <person name="Abril J.F."/>
            <person name="Guigo R."/>
            <person name="Smit A."/>
            <person name="Dubchak I."/>
            <person name="Rubin E.M."/>
            <person name="Couronne O."/>
            <person name="Poliakov A."/>
            <person name="Huebner N."/>
            <person name="Ganten D."/>
            <person name="Goesele C."/>
            <person name="Hummel O."/>
            <person name="Kreitler T."/>
            <person name="Lee Y.-A."/>
            <person name="Monti J."/>
            <person name="Schulz H."/>
            <person name="Zimdahl H."/>
            <person name="Himmelbauer H."/>
            <person name="Lehrach H."/>
            <person name="Jacob H.J."/>
            <person name="Bromberg S."/>
            <person name="Gullings-Handley J."/>
            <person name="Jensen-Seaman M.I."/>
            <person name="Kwitek A.E."/>
            <person name="Lazar J."/>
            <person name="Pasko D."/>
            <person name="Tonellato P.J."/>
            <person name="Twigger S."/>
            <person name="Ponting C.P."/>
            <person name="Duarte J.M."/>
            <person name="Rice S."/>
            <person name="Goodstadt L."/>
            <person name="Beatson S.A."/>
            <person name="Emes R.D."/>
            <person name="Winter E.E."/>
            <person name="Webber C."/>
            <person name="Brandt P."/>
            <person name="Nyakatura G."/>
            <person name="Adetobi M."/>
            <person name="Chiaromonte F."/>
            <person name="Elnitski L."/>
            <person name="Eswara P."/>
            <person name="Hardison R.C."/>
            <person name="Hou M."/>
            <person name="Kolbe D."/>
            <person name="Makova K."/>
            <person name="Miller W."/>
            <person name="Nekrutenko A."/>
            <person name="Riemer C."/>
            <person name="Schwartz S."/>
            <person name="Taylor J."/>
            <person name="Yang S."/>
            <person name="Zhang Y."/>
            <person name="Lindpaintner K."/>
            <person name="Andrews T.D."/>
            <person name="Caccamo M."/>
            <person name="Clamp M."/>
            <person name="Clarke L."/>
            <person name="Curwen V."/>
            <person name="Durbin R.M."/>
            <person name="Eyras E."/>
            <person name="Searle S.M."/>
            <person name="Cooper G.M."/>
            <person name="Batzoglou S."/>
            <person name="Brudno M."/>
            <person name="Sidow A."/>
            <person name="Stone E.A."/>
            <person name="Payseur B.A."/>
            <person name="Bourque G."/>
            <person name="Lopez-Otin C."/>
            <person name="Puente X.S."/>
            <person name="Chakrabarti K."/>
            <person name="Chatterji S."/>
            <person name="Dewey C."/>
            <person name="Pachter L."/>
            <person name="Bray N."/>
            <person name="Yap V.B."/>
            <person name="Caspi A."/>
            <person name="Tesler G."/>
            <person name="Pevzner P.A."/>
            <person name="Haussler D."/>
            <person name="Roskin K.M."/>
            <person name="Baertsch R."/>
            <person name="Clawson H."/>
            <person name="Furey T.S."/>
            <person name="Hinrichs A.S."/>
            <person name="Karolchik D."/>
            <person name="Kent W.J."/>
            <person name="Rosenbloom K.R."/>
            <person name="Trumbower H."/>
            <person name="Weirauch M."/>
            <person name="Cooper D.N."/>
            <person name="Stenson P.D."/>
            <person name="Ma B."/>
            <person name="Brent M."/>
            <person name="Arumugam M."/>
            <person name="Shteynberg D."/>
            <person name="Copley R.R."/>
            <person name="Taylor M.S."/>
            <person name="Riethman H."/>
            <person name="Mudunuri U."/>
            <person name="Peterson J."/>
            <person name="Guyer M."/>
            <person name="Felsenfeld A."/>
            <person name="Old S."/>
            <person name="Mockrin S."/>
            <person name="Collins F.S."/>
        </authorList>
    </citation>
    <scope>NUCLEOTIDE SEQUENCE [LARGE SCALE GENOMIC DNA]</scope>
    <source>
        <strain>Brown Norway</strain>
    </source>
</reference>
<reference key="2">
    <citation type="submission" date="2005-07" db="EMBL/GenBank/DDBJ databases">
        <authorList>
            <person name="Mural R.J."/>
            <person name="Adams M.D."/>
            <person name="Myers E.W."/>
            <person name="Smith H.O."/>
            <person name="Venter J.C."/>
        </authorList>
    </citation>
    <scope>NUCLEOTIDE SEQUENCE [LARGE SCALE GENOMIC DNA]</scope>
    <source>
        <strain>Brown Norway</strain>
    </source>
</reference>
<reference key="3">
    <citation type="journal article" date="2012" name="Nat. Commun.">
        <title>Quantitative maps of protein phosphorylation sites across 14 different rat organs and tissues.</title>
        <authorList>
            <person name="Lundby A."/>
            <person name="Secher A."/>
            <person name="Lage K."/>
            <person name="Nordsborg N.B."/>
            <person name="Dmytriyev A."/>
            <person name="Lundby C."/>
            <person name="Olsen J.V."/>
        </authorList>
    </citation>
    <scope>PHOSPHORYLATION [LARGE SCALE ANALYSIS] AT SER-2; SER-12; SER-43 AND SER-67</scope>
    <scope>IDENTIFICATION BY MASS SPECTROMETRY [LARGE SCALE ANALYSIS]</scope>
</reference>
<comment type="function">
    <text evidence="1">H1 histones bind to linker DNA between nucleosomes forming the macromolecular structure known as the chromatin fiber. H1 histones are necessary for the condensation of nucleosome chains into higher-order structured fibers. Also acts as a regulator of individual gene transcription through chromatin remodeling (By similarity).</text>
</comment>
<comment type="subunit">
    <text evidence="1">Interacts with DFFB.</text>
</comment>
<comment type="subcellular location">
    <subcellularLocation>
        <location evidence="6">Nucleus</location>
    </subcellularLocation>
    <subcellularLocation>
        <location evidence="6">Chromosome</location>
    </subcellularLocation>
    <text evidence="1">Mainly localizes in euchromatin.</text>
</comment>
<comment type="domain">
    <text evidence="1">The C-terminal domain is required for high-affinity binding to chromatin.</text>
</comment>
<comment type="PTM">
    <text evidence="3">H1 histones are progressively phosphorylated during the cell cycle, becoming maximally phosphorylated during late G2 phase and M phase, and being dephosphorylated sharply thereafter.</text>
</comment>
<comment type="PTM">
    <text evidence="3">Citrullination at Arg-56 (H1R54ci) by PADI4 takes place within the DNA-binding site of H1 and results in its displacement from chromatin and global chromatin decondensation, thereby promoting pluripotency and stem cell maintenance.</text>
</comment>
<comment type="similarity">
    <text evidence="6">Belongs to the histone H1/H5 family.</text>
</comment>